<reference key="1">
    <citation type="journal article" date="2000" name="Nucleic Acids Res.">
        <title>Genome sequences of Chlamydia trachomatis MoPn and Chlamydia pneumoniae AR39.</title>
        <authorList>
            <person name="Read T.D."/>
            <person name="Brunham R.C."/>
            <person name="Shen C."/>
            <person name="Gill S.R."/>
            <person name="Heidelberg J.F."/>
            <person name="White O."/>
            <person name="Hickey E.K."/>
            <person name="Peterson J.D."/>
            <person name="Utterback T.R."/>
            <person name="Berry K.J."/>
            <person name="Bass S."/>
            <person name="Linher K.D."/>
            <person name="Weidman J.F."/>
            <person name="Khouri H.M."/>
            <person name="Craven B."/>
            <person name="Bowman C."/>
            <person name="Dodson R.J."/>
            <person name="Gwinn M.L."/>
            <person name="Nelson W.C."/>
            <person name="DeBoy R.T."/>
            <person name="Kolonay J.F."/>
            <person name="McClarty G."/>
            <person name="Salzberg S.L."/>
            <person name="Eisen J.A."/>
            <person name="Fraser C.M."/>
        </authorList>
    </citation>
    <scope>NUCLEOTIDE SEQUENCE [LARGE SCALE GENOMIC DNA]</scope>
    <source>
        <strain>MoPn / Nigg</strain>
    </source>
</reference>
<name>RPE_CHLMU</name>
<protein>
    <recommendedName>
        <fullName evidence="1">Ribulose-phosphate 3-epimerase</fullName>
        <ecNumber evidence="1">5.1.3.1</ecNumber>
    </recommendedName>
</protein>
<keyword id="KW-0119">Carbohydrate metabolism</keyword>
<keyword id="KW-0413">Isomerase</keyword>
<keyword id="KW-0479">Metal-binding</keyword>
<comment type="function">
    <text evidence="1">Catalyzes the reversible epimerization of D-ribulose 5-phosphate to D-xylulose 5-phosphate.</text>
</comment>
<comment type="catalytic activity">
    <reaction evidence="1">
        <text>D-ribulose 5-phosphate = D-xylulose 5-phosphate</text>
        <dbReference type="Rhea" id="RHEA:13677"/>
        <dbReference type="ChEBI" id="CHEBI:57737"/>
        <dbReference type="ChEBI" id="CHEBI:58121"/>
        <dbReference type="EC" id="5.1.3.1"/>
    </reaction>
</comment>
<comment type="cofactor">
    <cofactor evidence="1">
        <name>a divalent metal cation</name>
        <dbReference type="ChEBI" id="CHEBI:60240"/>
    </cofactor>
    <text evidence="1">Binds 1 divalent metal cation per subunit.</text>
</comment>
<comment type="pathway">
    <text evidence="1">Carbohydrate degradation.</text>
</comment>
<comment type="similarity">
    <text evidence="1">Belongs to the ribulose-phosphate 3-epimerase family.</text>
</comment>
<organism>
    <name type="scientific">Chlamydia muridarum (strain MoPn / Nigg)</name>
    <dbReference type="NCBI Taxonomy" id="243161"/>
    <lineage>
        <taxon>Bacteria</taxon>
        <taxon>Pseudomonadati</taxon>
        <taxon>Chlamydiota</taxon>
        <taxon>Chlamydiia</taxon>
        <taxon>Chlamydiales</taxon>
        <taxon>Chlamydiaceae</taxon>
        <taxon>Chlamydia/Chlamydophila group</taxon>
        <taxon>Chlamydia</taxon>
    </lineage>
</organism>
<proteinExistence type="inferred from homology"/>
<evidence type="ECO:0000255" key="1">
    <source>
        <dbReference type="HAMAP-Rule" id="MF_02227"/>
    </source>
</evidence>
<gene>
    <name evidence="1" type="primary">rpe</name>
    <name type="ordered locus">TC_0397</name>
</gene>
<feature type="chain" id="PRO_0000171565" description="Ribulose-phosphate 3-epimerase">
    <location>
        <begin position="1"/>
        <end position="228"/>
    </location>
</feature>
<feature type="active site" description="Proton acceptor" evidence="1">
    <location>
        <position position="38"/>
    </location>
</feature>
<feature type="active site" description="Proton donor" evidence="1">
    <location>
        <position position="180"/>
    </location>
</feature>
<feature type="binding site" evidence="1">
    <location>
        <position position="11"/>
    </location>
    <ligand>
        <name>substrate</name>
    </ligand>
</feature>
<feature type="binding site" evidence="1">
    <location>
        <position position="36"/>
    </location>
    <ligand>
        <name>a divalent metal cation</name>
        <dbReference type="ChEBI" id="CHEBI:60240"/>
    </ligand>
</feature>
<feature type="binding site" evidence="1">
    <location>
        <position position="38"/>
    </location>
    <ligand>
        <name>a divalent metal cation</name>
        <dbReference type="ChEBI" id="CHEBI:60240"/>
    </ligand>
</feature>
<feature type="binding site" evidence="1">
    <location>
        <position position="69"/>
    </location>
    <ligand>
        <name>a divalent metal cation</name>
        <dbReference type="ChEBI" id="CHEBI:60240"/>
    </ligand>
</feature>
<feature type="binding site" evidence="1">
    <location>
        <position position="69"/>
    </location>
    <ligand>
        <name>substrate</name>
    </ligand>
</feature>
<feature type="binding site" evidence="1">
    <location>
        <begin position="145"/>
        <end position="148"/>
    </location>
    <ligand>
        <name>substrate</name>
    </ligand>
</feature>
<feature type="binding site" evidence="1">
    <location>
        <begin position="180"/>
        <end position="182"/>
    </location>
    <ligand>
        <name>substrate</name>
    </ligand>
</feature>
<feature type="binding site" evidence="1">
    <location>
        <position position="180"/>
    </location>
    <ligand>
        <name>a divalent metal cation</name>
        <dbReference type="ChEBI" id="CHEBI:60240"/>
    </ligand>
</feature>
<feature type="binding site" evidence="1">
    <location>
        <begin position="202"/>
        <end position="203"/>
    </location>
    <ligand>
        <name>substrate</name>
    </ligand>
</feature>
<sequence length="228" mass="24823">MKKQGVLIAPSIMGADLACLGDAARNIEESGANLIHIDVMDGHFVPNITFGPGIIAAINRSTDLFLEVHAMIYTPFEFVEAFVKAGADRIIVHFEAAENLKEILDYIRKCGVQAGIAFSPETSIEFISAFIPLCDVILLMSVQPGFCGQKFIPDTIEKIRFVRQAIQTLGKEGSCLIEVDGGIDEESARACREAGADILVAASYFFKKDSINMKEKVLLLQGEEHGAK</sequence>
<dbReference type="EC" id="5.1.3.1" evidence="1"/>
<dbReference type="EMBL" id="AE002160">
    <property type="protein sequence ID" value="AAF39254.1"/>
    <property type="molecule type" value="Genomic_DNA"/>
</dbReference>
<dbReference type="PIR" id="A81708">
    <property type="entry name" value="A81708"/>
</dbReference>
<dbReference type="RefSeq" id="WP_010230361.1">
    <property type="nucleotide sequence ID" value="NZ_CP063055.1"/>
</dbReference>
<dbReference type="SMR" id="Q9PKR7"/>
<dbReference type="GeneID" id="1245749"/>
<dbReference type="KEGG" id="cmu:TC_0397"/>
<dbReference type="eggNOG" id="COG0036">
    <property type="taxonomic scope" value="Bacteria"/>
</dbReference>
<dbReference type="HOGENOM" id="CLU_054856_2_1_0"/>
<dbReference type="OrthoDB" id="1645589at2"/>
<dbReference type="Proteomes" id="UP000000800">
    <property type="component" value="Chromosome"/>
</dbReference>
<dbReference type="GO" id="GO:0004750">
    <property type="term" value="F:D-ribulose-phosphate 3-epimerase activity"/>
    <property type="evidence" value="ECO:0007669"/>
    <property type="project" value="UniProtKB-UniRule"/>
</dbReference>
<dbReference type="GO" id="GO:0046872">
    <property type="term" value="F:metal ion binding"/>
    <property type="evidence" value="ECO:0007669"/>
    <property type="project" value="UniProtKB-UniRule"/>
</dbReference>
<dbReference type="GO" id="GO:0019323">
    <property type="term" value="P:pentose catabolic process"/>
    <property type="evidence" value="ECO:0007669"/>
    <property type="project" value="UniProtKB-UniRule"/>
</dbReference>
<dbReference type="GO" id="GO:0006098">
    <property type="term" value="P:pentose-phosphate shunt"/>
    <property type="evidence" value="ECO:0007669"/>
    <property type="project" value="InterPro"/>
</dbReference>
<dbReference type="CDD" id="cd00429">
    <property type="entry name" value="RPE"/>
    <property type="match status" value="1"/>
</dbReference>
<dbReference type="FunFam" id="3.20.20.70:FF:000004">
    <property type="entry name" value="Ribulose-phosphate 3-epimerase"/>
    <property type="match status" value="1"/>
</dbReference>
<dbReference type="Gene3D" id="3.20.20.70">
    <property type="entry name" value="Aldolase class I"/>
    <property type="match status" value="1"/>
</dbReference>
<dbReference type="HAMAP" id="MF_02227">
    <property type="entry name" value="RPE"/>
    <property type="match status" value="1"/>
</dbReference>
<dbReference type="InterPro" id="IPR013785">
    <property type="entry name" value="Aldolase_TIM"/>
</dbReference>
<dbReference type="InterPro" id="IPR026019">
    <property type="entry name" value="Ribul_P_3_epim"/>
</dbReference>
<dbReference type="InterPro" id="IPR000056">
    <property type="entry name" value="Ribul_P_3_epim-like"/>
</dbReference>
<dbReference type="InterPro" id="IPR011060">
    <property type="entry name" value="RibuloseP-bd_barrel"/>
</dbReference>
<dbReference type="NCBIfam" id="NF004076">
    <property type="entry name" value="PRK05581.1-4"/>
    <property type="match status" value="1"/>
</dbReference>
<dbReference type="NCBIfam" id="TIGR01163">
    <property type="entry name" value="rpe"/>
    <property type="match status" value="1"/>
</dbReference>
<dbReference type="PANTHER" id="PTHR11749">
    <property type="entry name" value="RIBULOSE-5-PHOSPHATE-3-EPIMERASE"/>
    <property type="match status" value="1"/>
</dbReference>
<dbReference type="Pfam" id="PF00834">
    <property type="entry name" value="Ribul_P_3_epim"/>
    <property type="match status" value="1"/>
</dbReference>
<dbReference type="PIRSF" id="PIRSF001461">
    <property type="entry name" value="RPE"/>
    <property type="match status" value="1"/>
</dbReference>
<dbReference type="SUPFAM" id="SSF51366">
    <property type="entry name" value="Ribulose-phoshate binding barrel"/>
    <property type="match status" value="1"/>
</dbReference>
<dbReference type="PROSITE" id="PS01085">
    <property type="entry name" value="RIBUL_P_3_EPIMER_1"/>
    <property type="match status" value="1"/>
</dbReference>
<dbReference type="PROSITE" id="PS01086">
    <property type="entry name" value="RIBUL_P_3_EPIMER_2"/>
    <property type="match status" value="1"/>
</dbReference>
<accession>Q9PKR7</accession>